<dbReference type="EC" id="1.2.4.2" evidence="1"/>
<dbReference type="EMBL" id="AE017194">
    <property type="protein sequence ID" value="AAS40309.1"/>
    <property type="molecule type" value="Genomic_DNA"/>
</dbReference>
<dbReference type="SMR" id="Q73BN8"/>
<dbReference type="KEGG" id="bca:BCE_1380"/>
<dbReference type="HOGENOM" id="CLU_004709_1_0_9"/>
<dbReference type="Proteomes" id="UP000002527">
    <property type="component" value="Chromosome"/>
</dbReference>
<dbReference type="GO" id="GO:0005829">
    <property type="term" value="C:cytosol"/>
    <property type="evidence" value="ECO:0007669"/>
    <property type="project" value="TreeGrafter"/>
</dbReference>
<dbReference type="GO" id="GO:0045252">
    <property type="term" value="C:oxoglutarate dehydrogenase complex"/>
    <property type="evidence" value="ECO:0007669"/>
    <property type="project" value="TreeGrafter"/>
</dbReference>
<dbReference type="GO" id="GO:0004591">
    <property type="term" value="F:oxoglutarate dehydrogenase (succinyl-transferring) activity"/>
    <property type="evidence" value="ECO:0007669"/>
    <property type="project" value="UniProtKB-UniRule"/>
</dbReference>
<dbReference type="GO" id="GO:0030976">
    <property type="term" value="F:thiamine pyrophosphate binding"/>
    <property type="evidence" value="ECO:0007669"/>
    <property type="project" value="UniProtKB-UniRule"/>
</dbReference>
<dbReference type="GO" id="GO:0006096">
    <property type="term" value="P:glycolytic process"/>
    <property type="evidence" value="ECO:0007669"/>
    <property type="project" value="UniProtKB-UniRule"/>
</dbReference>
<dbReference type="GO" id="GO:0006099">
    <property type="term" value="P:tricarboxylic acid cycle"/>
    <property type="evidence" value="ECO:0007669"/>
    <property type="project" value="TreeGrafter"/>
</dbReference>
<dbReference type="CDD" id="cd02016">
    <property type="entry name" value="TPP_E1_OGDC_like"/>
    <property type="match status" value="1"/>
</dbReference>
<dbReference type="FunFam" id="3.40.50.11610:FF:000002">
    <property type="entry name" value="2-oxoglutarate dehydrogenase E1 component"/>
    <property type="match status" value="1"/>
</dbReference>
<dbReference type="FunFam" id="3.40.50.970:FF:000036">
    <property type="entry name" value="2-oxoglutarate dehydrogenase E1 component"/>
    <property type="match status" value="1"/>
</dbReference>
<dbReference type="Gene3D" id="3.40.50.12470">
    <property type="match status" value="1"/>
</dbReference>
<dbReference type="Gene3D" id="3.40.50.970">
    <property type="match status" value="1"/>
</dbReference>
<dbReference type="Gene3D" id="3.40.50.11610">
    <property type="entry name" value="Multifunctional 2-oxoglutarate metabolism enzyme, C-terminal domain"/>
    <property type="match status" value="1"/>
</dbReference>
<dbReference type="HAMAP" id="MF_01169">
    <property type="entry name" value="SucA_OdhA"/>
    <property type="match status" value="1"/>
</dbReference>
<dbReference type="InterPro" id="IPR011603">
    <property type="entry name" value="2oxoglutarate_DH_E1"/>
</dbReference>
<dbReference type="InterPro" id="IPR023784">
    <property type="entry name" value="2oxoglutarate_DH_E1_bac"/>
</dbReference>
<dbReference type="InterPro" id="IPR001017">
    <property type="entry name" value="DH_E1"/>
</dbReference>
<dbReference type="InterPro" id="IPR042179">
    <property type="entry name" value="KGD_C_sf"/>
</dbReference>
<dbReference type="InterPro" id="IPR031717">
    <property type="entry name" value="ODO-1/KGD_C"/>
</dbReference>
<dbReference type="InterPro" id="IPR029061">
    <property type="entry name" value="THDP-binding"/>
</dbReference>
<dbReference type="InterPro" id="IPR005475">
    <property type="entry name" value="Transketolase-like_Pyr-bd"/>
</dbReference>
<dbReference type="NCBIfam" id="TIGR00239">
    <property type="entry name" value="2oxo_dh_E1"/>
    <property type="match status" value="1"/>
</dbReference>
<dbReference type="NCBIfam" id="NF006914">
    <property type="entry name" value="PRK09404.1"/>
    <property type="match status" value="1"/>
</dbReference>
<dbReference type="NCBIfam" id="NF008907">
    <property type="entry name" value="PRK12270.1"/>
    <property type="match status" value="1"/>
</dbReference>
<dbReference type="PANTHER" id="PTHR23152:SF4">
    <property type="entry name" value="2-OXOADIPATE DEHYDROGENASE COMPLEX COMPONENT E1"/>
    <property type="match status" value="1"/>
</dbReference>
<dbReference type="PANTHER" id="PTHR23152">
    <property type="entry name" value="2-OXOGLUTARATE DEHYDROGENASE"/>
    <property type="match status" value="1"/>
</dbReference>
<dbReference type="Pfam" id="PF00676">
    <property type="entry name" value="E1_dh"/>
    <property type="match status" value="1"/>
</dbReference>
<dbReference type="Pfam" id="PF16870">
    <property type="entry name" value="OxoGdeHyase_C"/>
    <property type="match status" value="1"/>
</dbReference>
<dbReference type="Pfam" id="PF02779">
    <property type="entry name" value="Transket_pyr"/>
    <property type="match status" value="1"/>
</dbReference>
<dbReference type="PIRSF" id="PIRSF000157">
    <property type="entry name" value="Oxoglu_dh_E1"/>
    <property type="match status" value="1"/>
</dbReference>
<dbReference type="SMART" id="SM00861">
    <property type="entry name" value="Transket_pyr"/>
    <property type="match status" value="1"/>
</dbReference>
<dbReference type="SUPFAM" id="SSF52518">
    <property type="entry name" value="Thiamin diphosphate-binding fold (THDP-binding)"/>
    <property type="match status" value="2"/>
</dbReference>
<accession>Q73BN8</accession>
<reference key="1">
    <citation type="journal article" date="2004" name="Nucleic Acids Res.">
        <title>The genome sequence of Bacillus cereus ATCC 10987 reveals metabolic adaptations and a large plasmid related to Bacillus anthracis pXO1.</title>
        <authorList>
            <person name="Rasko D.A."/>
            <person name="Ravel J."/>
            <person name="Oekstad O.A."/>
            <person name="Helgason E."/>
            <person name="Cer R.Z."/>
            <person name="Jiang L."/>
            <person name="Shores K.A."/>
            <person name="Fouts D.E."/>
            <person name="Tourasse N.J."/>
            <person name="Angiuoli S.V."/>
            <person name="Kolonay J.F."/>
            <person name="Nelson W.C."/>
            <person name="Kolstoe A.-B."/>
            <person name="Fraser C.M."/>
            <person name="Read T.D."/>
        </authorList>
    </citation>
    <scope>NUCLEOTIDE SEQUENCE [LARGE SCALE GENOMIC DNA]</scope>
    <source>
        <strain>ATCC 10987 / NRS 248</strain>
    </source>
</reference>
<sequence length="955" mass="106460">MTRKNTTTNPWAKFHGPNLGYVIEQYDLYVTGAGSVDPELQELFEIFGAPSFQDDVVTGDNTATHFSPQNTGNIEKILKVVQLVEQIRSFGHTLAHINPMEDAANGQSLLEKAMNELSDADLKAIPAKTVWQDAPEGIHTALDVIHRLKEVYTQTLAYEFSHIQDSEERAWLHQMVESNSLRQPLSNKKRTALLKRLTAVEGFEQFLHKTFVGQKRFSIEGVDMLVPVLDEIVLEGAKNGVEDVMIGMAHRGRLSVLAHVLEKPYSHMFAEFKHAKIEGAVANSGWTGDVKYHLGREQVVSNEEVSTRVTLANNPSHLEFVNPVVEGFARAAQENRKKSGLPEQDTSKSFVILVHGDAAFPGQGIVSETLNLSRLNAYQTGGTIHVIANNAVGFTTDSYDSRSTKYSSDLAKGFDIPIVHVNADDPEACLAAANLAIQYRMLFKKDFLIDLIGYRRYGHNEMDDPAVTQPQVYKKIKNHPTVRAIYADQLQAAGVLNADEIETITQFIQEQLKSDYAQVPPADTSDATIHVKVPDVVAKGIQPIDTGVELDSLRAINEGLLSWPEGFNVYPKVKKILERRKDALEENGKIEWALAESLAFASILQEGTPIRLTGQDSQRGTFAHRHIVLHDTDTNETYSPLHRLPNINASFSVHNSPLSEAAVVGYEYGYNVFAPETLVMWEAQYGDFSNTAQALFDQYVSAGRAKWGQKSGLVLLLPHGYEGQGPEHSSARPERFLQLAAENNWTVANLTSAAQYFHILRRQASVLGTEAVRPLVLMTPKSLLRHPLTLSTASQLSEGRFQPALEQENLGTKPNKVKRLVLSTGKMAIDLAAEIESGKHEYNLDEIHIVRIEQLYPFPAEKVQSIIKRFKNLEEIIWVQEEPRNMGAWHYMAPILFELAGDKVKTGYIGRPDRSSPSGGDPFAHKAEQELIVAHALDVKYNFRQDKLEIEVFSN</sequence>
<keyword id="KW-0324">Glycolysis</keyword>
<keyword id="KW-0560">Oxidoreductase</keyword>
<keyword id="KW-0786">Thiamine pyrophosphate</keyword>
<comment type="function">
    <text evidence="1">E1 component of the 2-oxoglutarate dehydrogenase (OGDH) complex which catalyzes the decarboxylation of 2-oxoglutarate, the first step in the conversion of 2-oxoglutarate to succinyl-CoA and CO(2).</text>
</comment>
<comment type="catalytic activity">
    <reaction evidence="1">
        <text>N(6)-[(R)-lipoyl]-L-lysyl-[protein] + 2-oxoglutarate + H(+) = N(6)-[(R)-S(8)-succinyldihydrolipoyl]-L-lysyl-[protein] + CO2</text>
        <dbReference type="Rhea" id="RHEA:12188"/>
        <dbReference type="Rhea" id="RHEA-COMP:10474"/>
        <dbReference type="Rhea" id="RHEA-COMP:20092"/>
        <dbReference type="ChEBI" id="CHEBI:15378"/>
        <dbReference type="ChEBI" id="CHEBI:16526"/>
        <dbReference type="ChEBI" id="CHEBI:16810"/>
        <dbReference type="ChEBI" id="CHEBI:83099"/>
        <dbReference type="ChEBI" id="CHEBI:83120"/>
        <dbReference type="EC" id="1.2.4.2"/>
    </reaction>
</comment>
<comment type="cofactor">
    <cofactor evidence="1">
        <name>thiamine diphosphate</name>
        <dbReference type="ChEBI" id="CHEBI:58937"/>
    </cofactor>
</comment>
<comment type="subunit">
    <text evidence="1">Homodimer. Part of the 2-oxoglutarate dehydrogenase (OGDH) complex composed of E1 (2-oxoglutarate dehydrogenase), E2 (dihydrolipoamide succinyltransferase) and E3 (dihydrolipoamide dehydrogenase); the complex contains multiple copies of the three enzymatic components (E1, E2 and E3).</text>
</comment>
<comment type="similarity">
    <text evidence="1">Belongs to the alpha-ketoglutarate dehydrogenase family.</text>
</comment>
<gene>
    <name evidence="1" type="primary">odhA</name>
    <name type="ordered locus">BCE_1380</name>
</gene>
<protein>
    <recommendedName>
        <fullName evidence="1">2-oxoglutarate dehydrogenase E1 component</fullName>
        <ecNumber evidence="1">1.2.4.2</ecNumber>
    </recommendedName>
    <alternativeName>
        <fullName evidence="1">Alpha-ketoglutarate dehydrogenase</fullName>
    </alternativeName>
</protein>
<proteinExistence type="inferred from homology"/>
<name>ODO1_BACC1</name>
<organism>
    <name type="scientific">Bacillus cereus (strain ATCC 10987 / NRS 248)</name>
    <dbReference type="NCBI Taxonomy" id="222523"/>
    <lineage>
        <taxon>Bacteria</taxon>
        <taxon>Bacillati</taxon>
        <taxon>Bacillota</taxon>
        <taxon>Bacilli</taxon>
        <taxon>Bacillales</taxon>
        <taxon>Bacillaceae</taxon>
        <taxon>Bacillus</taxon>
        <taxon>Bacillus cereus group</taxon>
    </lineage>
</organism>
<evidence type="ECO:0000255" key="1">
    <source>
        <dbReference type="HAMAP-Rule" id="MF_01169"/>
    </source>
</evidence>
<feature type="chain" id="PRO_0000162162" description="2-oxoglutarate dehydrogenase E1 component">
    <location>
        <begin position="1"/>
        <end position="955"/>
    </location>
</feature>